<dbReference type="EC" id="2.1.1.192" evidence="1"/>
<dbReference type="EMBL" id="CP000800">
    <property type="protein sequence ID" value="ABV19576.1"/>
    <property type="molecule type" value="Genomic_DNA"/>
</dbReference>
<dbReference type="RefSeq" id="WP_000003317.1">
    <property type="nucleotide sequence ID" value="NC_009801.1"/>
</dbReference>
<dbReference type="SMR" id="A7ZPW0"/>
<dbReference type="KEGG" id="ecw:EcE24377A_2801"/>
<dbReference type="HOGENOM" id="CLU_029101_0_0_6"/>
<dbReference type="BRENDA" id="2.1.1.B122">
    <property type="organism ID" value="2026"/>
</dbReference>
<dbReference type="Proteomes" id="UP000001122">
    <property type="component" value="Chromosome"/>
</dbReference>
<dbReference type="GO" id="GO:0005737">
    <property type="term" value="C:cytoplasm"/>
    <property type="evidence" value="ECO:0007669"/>
    <property type="project" value="UniProtKB-SubCell"/>
</dbReference>
<dbReference type="GO" id="GO:0051539">
    <property type="term" value="F:4 iron, 4 sulfur cluster binding"/>
    <property type="evidence" value="ECO:0007669"/>
    <property type="project" value="UniProtKB-UniRule"/>
</dbReference>
<dbReference type="GO" id="GO:0046872">
    <property type="term" value="F:metal ion binding"/>
    <property type="evidence" value="ECO:0007669"/>
    <property type="project" value="UniProtKB-KW"/>
</dbReference>
<dbReference type="GO" id="GO:0070040">
    <property type="term" value="F:rRNA (adenine(2503)-C2-)-methyltransferase activity"/>
    <property type="evidence" value="ECO:0007669"/>
    <property type="project" value="UniProtKB-UniRule"/>
</dbReference>
<dbReference type="GO" id="GO:0019843">
    <property type="term" value="F:rRNA binding"/>
    <property type="evidence" value="ECO:0007669"/>
    <property type="project" value="UniProtKB-UniRule"/>
</dbReference>
<dbReference type="GO" id="GO:0002935">
    <property type="term" value="F:tRNA (adenine(37)-C2)-methyltransferase activity"/>
    <property type="evidence" value="ECO:0007669"/>
    <property type="project" value="UniProtKB-UniRule"/>
</dbReference>
<dbReference type="GO" id="GO:0000049">
    <property type="term" value="F:tRNA binding"/>
    <property type="evidence" value="ECO:0007669"/>
    <property type="project" value="UniProtKB-UniRule"/>
</dbReference>
<dbReference type="GO" id="GO:0070475">
    <property type="term" value="P:rRNA base methylation"/>
    <property type="evidence" value="ECO:0007669"/>
    <property type="project" value="UniProtKB-UniRule"/>
</dbReference>
<dbReference type="GO" id="GO:0030488">
    <property type="term" value="P:tRNA methylation"/>
    <property type="evidence" value="ECO:0007669"/>
    <property type="project" value="UniProtKB-UniRule"/>
</dbReference>
<dbReference type="CDD" id="cd01335">
    <property type="entry name" value="Radical_SAM"/>
    <property type="match status" value="1"/>
</dbReference>
<dbReference type="FunFam" id="1.10.150.530:FF:000001">
    <property type="entry name" value="Dual-specificity RNA methyltransferase RlmN"/>
    <property type="match status" value="1"/>
</dbReference>
<dbReference type="FunFam" id="3.20.20.70:FF:000008">
    <property type="entry name" value="Dual-specificity RNA methyltransferase RlmN"/>
    <property type="match status" value="1"/>
</dbReference>
<dbReference type="Gene3D" id="1.10.150.530">
    <property type="match status" value="1"/>
</dbReference>
<dbReference type="Gene3D" id="3.20.20.70">
    <property type="entry name" value="Aldolase class I"/>
    <property type="match status" value="1"/>
</dbReference>
<dbReference type="HAMAP" id="MF_01849">
    <property type="entry name" value="RNA_methyltr_RlmN"/>
    <property type="match status" value="1"/>
</dbReference>
<dbReference type="InterPro" id="IPR013785">
    <property type="entry name" value="Aldolase_TIM"/>
</dbReference>
<dbReference type="InterPro" id="IPR040072">
    <property type="entry name" value="Methyltransferase_A"/>
</dbReference>
<dbReference type="InterPro" id="IPR048641">
    <property type="entry name" value="RlmN_N"/>
</dbReference>
<dbReference type="InterPro" id="IPR027492">
    <property type="entry name" value="RNA_MTrfase_RlmN"/>
</dbReference>
<dbReference type="InterPro" id="IPR004383">
    <property type="entry name" value="rRNA_lsu_MTrfase_RlmN/Cfr"/>
</dbReference>
<dbReference type="InterPro" id="IPR007197">
    <property type="entry name" value="rSAM"/>
</dbReference>
<dbReference type="NCBIfam" id="NF008396">
    <property type="entry name" value="PRK11194.1"/>
    <property type="match status" value="1"/>
</dbReference>
<dbReference type="NCBIfam" id="TIGR00048">
    <property type="entry name" value="rRNA_mod_RlmN"/>
    <property type="match status" value="1"/>
</dbReference>
<dbReference type="PANTHER" id="PTHR30544">
    <property type="entry name" value="23S RRNA METHYLTRANSFERASE"/>
    <property type="match status" value="1"/>
</dbReference>
<dbReference type="PANTHER" id="PTHR30544:SF5">
    <property type="entry name" value="RADICAL SAM CORE DOMAIN-CONTAINING PROTEIN"/>
    <property type="match status" value="1"/>
</dbReference>
<dbReference type="Pfam" id="PF04055">
    <property type="entry name" value="Radical_SAM"/>
    <property type="match status" value="1"/>
</dbReference>
<dbReference type="Pfam" id="PF21016">
    <property type="entry name" value="RlmN_N"/>
    <property type="match status" value="1"/>
</dbReference>
<dbReference type="PIRSF" id="PIRSF006004">
    <property type="entry name" value="CHP00048"/>
    <property type="match status" value="1"/>
</dbReference>
<dbReference type="SFLD" id="SFLDF00275">
    <property type="entry name" value="adenosine_C2_methyltransferase"/>
    <property type="match status" value="1"/>
</dbReference>
<dbReference type="SFLD" id="SFLDG01062">
    <property type="entry name" value="methyltransferase_(Class_A)"/>
    <property type="match status" value="1"/>
</dbReference>
<dbReference type="SUPFAM" id="SSF102114">
    <property type="entry name" value="Radical SAM enzymes"/>
    <property type="match status" value="1"/>
</dbReference>
<dbReference type="PROSITE" id="PS51918">
    <property type="entry name" value="RADICAL_SAM"/>
    <property type="match status" value="1"/>
</dbReference>
<protein>
    <recommendedName>
        <fullName evidence="1">Dual-specificity RNA methyltransferase RlmN</fullName>
        <ecNumber evidence="1">2.1.1.192</ecNumber>
    </recommendedName>
    <alternativeName>
        <fullName evidence="1">23S rRNA (adenine(2503)-C(2))-methyltransferase</fullName>
    </alternativeName>
    <alternativeName>
        <fullName evidence="1">23S rRNA m2A2503 methyltransferase</fullName>
    </alternativeName>
    <alternativeName>
        <fullName evidence="1">Ribosomal RNA large subunit methyltransferase N</fullName>
    </alternativeName>
    <alternativeName>
        <fullName evidence="1">tRNA (adenine(37)-C(2))-methyltransferase</fullName>
    </alternativeName>
    <alternativeName>
        <fullName evidence="1">tRNA m2A37 methyltransferase</fullName>
    </alternativeName>
</protein>
<reference key="1">
    <citation type="journal article" date="2008" name="J. Bacteriol.">
        <title>The pangenome structure of Escherichia coli: comparative genomic analysis of E. coli commensal and pathogenic isolates.</title>
        <authorList>
            <person name="Rasko D.A."/>
            <person name="Rosovitz M.J."/>
            <person name="Myers G.S.A."/>
            <person name="Mongodin E.F."/>
            <person name="Fricke W.F."/>
            <person name="Gajer P."/>
            <person name="Crabtree J."/>
            <person name="Sebaihia M."/>
            <person name="Thomson N.R."/>
            <person name="Chaudhuri R."/>
            <person name="Henderson I.R."/>
            <person name="Sperandio V."/>
            <person name="Ravel J."/>
        </authorList>
    </citation>
    <scope>NUCLEOTIDE SEQUENCE [LARGE SCALE GENOMIC DNA]</scope>
    <source>
        <strain>E24377A / ETEC</strain>
    </source>
</reference>
<name>RLMN_ECO24</name>
<proteinExistence type="inferred from homology"/>
<evidence type="ECO:0000255" key="1">
    <source>
        <dbReference type="HAMAP-Rule" id="MF_01849"/>
    </source>
</evidence>
<evidence type="ECO:0000255" key="2">
    <source>
        <dbReference type="PROSITE-ProRule" id="PRU01266"/>
    </source>
</evidence>
<comment type="function">
    <text evidence="1">Specifically methylates position 2 of adenine 2503 in 23S rRNA and position 2 of adenine 37 in tRNAs. m2A2503 modification seems to play a crucial role in the proofreading step occurring at the peptidyl transferase center and thus would serve to optimize ribosomal fidelity.</text>
</comment>
<comment type="catalytic activity">
    <reaction evidence="1">
        <text>adenosine(2503) in 23S rRNA + 2 reduced [2Fe-2S]-[ferredoxin] + 2 S-adenosyl-L-methionine = 2-methyladenosine(2503) in 23S rRNA + 5'-deoxyadenosine + L-methionine + 2 oxidized [2Fe-2S]-[ferredoxin] + S-adenosyl-L-homocysteine</text>
        <dbReference type="Rhea" id="RHEA:42916"/>
        <dbReference type="Rhea" id="RHEA-COMP:10000"/>
        <dbReference type="Rhea" id="RHEA-COMP:10001"/>
        <dbReference type="Rhea" id="RHEA-COMP:10152"/>
        <dbReference type="Rhea" id="RHEA-COMP:10282"/>
        <dbReference type="ChEBI" id="CHEBI:17319"/>
        <dbReference type="ChEBI" id="CHEBI:33737"/>
        <dbReference type="ChEBI" id="CHEBI:33738"/>
        <dbReference type="ChEBI" id="CHEBI:57844"/>
        <dbReference type="ChEBI" id="CHEBI:57856"/>
        <dbReference type="ChEBI" id="CHEBI:59789"/>
        <dbReference type="ChEBI" id="CHEBI:74411"/>
        <dbReference type="ChEBI" id="CHEBI:74497"/>
        <dbReference type="EC" id="2.1.1.192"/>
    </reaction>
</comment>
<comment type="catalytic activity">
    <reaction evidence="1">
        <text>adenosine(37) in tRNA + 2 reduced [2Fe-2S]-[ferredoxin] + 2 S-adenosyl-L-methionine = 2-methyladenosine(37) in tRNA + 5'-deoxyadenosine + L-methionine + 2 oxidized [2Fe-2S]-[ferredoxin] + S-adenosyl-L-homocysteine</text>
        <dbReference type="Rhea" id="RHEA:43332"/>
        <dbReference type="Rhea" id="RHEA-COMP:10000"/>
        <dbReference type="Rhea" id="RHEA-COMP:10001"/>
        <dbReference type="Rhea" id="RHEA-COMP:10162"/>
        <dbReference type="Rhea" id="RHEA-COMP:10485"/>
        <dbReference type="ChEBI" id="CHEBI:17319"/>
        <dbReference type="ChEBI" id="CHEBI:33737"/>
        <dbReference type="ChEBI" id="CHEBI:33738"/>
        <dbReference type="ChEBI" id="CHEBI:57844"/>
        <dbReference type="ChEBI" id="CHEBI:57856"/>
        <dbReference type="ChEBI" id="CHEBI:59789"/>
        <dbReference type="ChEBI" id="CHEBI:74411"/>
        <dbReference type="ChEBI" id="CHEBI:74497"/>
        <dbReference type="EC" id="2.1.1.192"/>
    </reaction>
</comment>
<comment type="cofactor">
    <cofactor evidence="1">
        <name>[4Fe-4S] cluster</name>
        <dbReference type="ChEBI" id="CHEBI:49883"/>
    </cofactor>
    <text evidence="1">Binds 1 [4Fe-4S] cluster. The cluster is coordinated with 3 cysteines and an exchangeable S-adenosyl-L-methionine.</text>
</comment>
<comment type="subcellular location">
    <subcellularLocation>
        <location evidence="1">Cytoplasm</location>
    </subcellularLocation>
</comment>
<comment type="miscellaneous">
    <text evidence="1">Reaction proceeds by a ping-pong mechanism involving intermediate methylation of a conserved cysteine residue.</text>
</comment>
<comment type="similarity">
    <text evidence="1">Belongs to the radical SAM superfamily. RlmN family.</text>
</comment>
<sequence>MSEQLVTPENVTTKDGKINLLDLNRQQMREFFKDLGEKPFRADQVMKWMYHYCCDNFDEMTDINKVLRGKLKEVAEIRAPEVVEEQRSSDGTIKWAIAVGDQRVETVYIPEDDRATLCVSSQVGCALECKFCSTAQQGFNRNLRVSEIIGQVWRAAKIVGAAKVTGQRPITNVVMMGMGEPLLNLNNVVPAMEIMLDDFGFGLSKRRVTLSTSGVVPALDKLGDMIDVALAISLHAPNDEIRDEIVPINKKYNIETFLAAVRRYLEKSNANQGRVTIEYVMLDHVNDGTEHAHQLAELLKDTPCKINLIPWNPFPGAPYGRSSNSRIDRFSKVLMSYGFTTIVRKTRGDDIDAACGQLAGDVIDRTKRTLRKRMQGEAIDIKAV</sequence>
<accession>A7ZPW0</accession>
<feature type="chain" id="PRO_0000350168" description="Dual-specificity RNA methyltransferase RlmN">
    <location>
        <begin position="1"/>
        <end position="384"/>
    </location>
</feature>
<feature type="domain" description="Radical SAM core" evidence="2">
    <location>
        <begin position="111"/>
        <end position="350"/>
    </location>
</feature>
<feature type="active site" description="Proton acceptor" evidence="1">
    <location>
        <position position="105"/>
    </location>
</feature>
<feature type="active site" description="S-methylcysteine intermediate" evidence="1">
    <location>
        <position position="355"/>
    </location>
</feature>
<feature type="binding site" evidence="1">
    <location>
        <position position="125"/>
    </location>
    <ligand>
        <name>[4Fe-4S] cluster</name>
        <dbReference type="ChEBI" id="CHEBI:49883"/>
        <note>4Fe-4S-S-AdoMet</note>
    </ligand>
</feature>
<feature type="binding site" evidence="1">
    <location>
        <position position="129"/>
    </location>
    <ligand>
        <name>[4Fe-4S] cluster</name>
        <dbReference type="ChEBI" id="CHEBI:49883"/>
        <note>4Fe-4S-S-AdoMet</note>
    </ligand>
</feature>
<feature type="binding site" evidence="1">
    <location>
        <position position="132"/>
    </location>
    <ligand>
        <name>[4Fe-4S] cluster</name>
        <dbReference type="ChEBI" id="CHEBI:49883"/>
        <note>4Fe-4S-S-AdoMet</note>
    </ligand>
</feature>
<feature type="binding site" evidence="1">
    <location>
        <begin position="179"/>
        <end position="180"/>
    </location>
    <ligand>
        <name>S-adenosyl-L-methionine</name>
        <dbReference type="ChEBI" id="CHEBI:59789"/>
    </ligand>
</feature>
<feature type="binding site" evidence="1">
    <location>
        <position position="211"/>
    </location>
    <ligand>
        <name>S-adenosyl-L-methionine</name>
        <dbReference type="ChEBI" id="CHEBI:59789"/>
    </ligand>
</feature>
<feature type="binding site" evidence="1">
    <location>
        <begin position="233"/>
        <end position="235"/>
    </location>
    <ligand>
        <name>S-adenosyl-L-methionine</name>
        <dbReference type="ChEBI" id="CHEBI:59789"/>
    </ligand>
</feature>
<feature type="binding site" evidence="1">
    <location>
        <position position="312"/>
    </location>
    <ligand>
        <name>S-adenosyl-L-methionine</name>
        <dbReference type="ChEBI" id="CHEBI:59789"/>
    </ligand>
</feature>
<feature type="disulfide bond" description="(transient)" evidence="1">
    <location>
        <begin position="118"/>
        <end position="355"/>
    </location>
</feature>
<keyword id="KW-0004">4Fe-4S</keyword>
<keyword id="KW-0963">Cytoplasm</keyword>
<keyword id="KW-1015">Disulfide bond</keyword>
<keyword id="KW-0408">Iron</keyword>
<keyword id="KW-0411">Iron-sulfur</keyword>
<keyword id="KW-0479">Metal-binding</keyword>
<keyword id="KW-0489">Methyltransferase</keyword>
<keyword id="KW-1185">Reference proteome</keyword>
<keyword id="KW-0698">rRNA processing</keyword>
<keyword id="KW-0949">S-adenosyl-L-methionine</keyword>
<keyword id="KW-0808">Transferase</keyword>
<keyword id="KW-0819">tRNA processing</keyword>
<organism>
    <name type="scientific">Escherichia coli O139:H28 (strain E24377A / ETEC)</name>
    <dbReference type="NCBI Taxonomy" id="331111"/>
    <lineage>
        <taxon>Bacteria</taxon>
        <taxon>Pseudomonadati</taxon>
        <taxon>Pseudomonadota</taxon>
        <taxon>Gammaproteobacteria</taxon>
        <taxon>Enterobacterales</taxon>
        <taxon>Enterobacteriaceae</taxon>
        <taxon>Escherichia</taxon>
    </lineage>
</organism>
<gene>
    <name evidence="1" type="primary">rlmN</name>
    <name type="ordered locus">EcE24377A_2801</name>
</gene>